<gene>
    <name evidence="1" type="primary">rpmC</name>
    <name type="ordered locus">NGK_2443</name>
</gene>
<reference key="1">
    <citation type="journal article" date="2008" name="J. Bacteriol.">
        <title>Complete genome sequence of Neisseria gonorrhoeae NCCP11945.</title>
        <authorList>
            <person name="Chung G.T."/>
            <person name="Yoo J.S."/>
            <person name="Oh H.B."/>
            <person name="Lee Y.S."/>
            <person name="Cha S.H."/>
            <person name="Kim S.J."/>
            <person name="Yoo C.K."/>
        </authorList>
    </citation>
    <scope>NUCLEOTIDE SEQUENCE [LARGE SCALE GENOMIC DNA]</scope>
    <source>
        <strain>NCCP11945</strain>
    </source>
</reference>
<protein>
    <recommendedName>
        <fullName evidence="1">Large ribosomal subunit protein uL29</fullName>
    </recommendedName>
    <alternativeName>
        <fullName evidence="2">50S ribosomal protein L29</fullName>
    </alternativeName>
</protein>
<keyword id="KW-0687">Ribonucleoprotein</keyword>
<keyword id="KW-0689">Ribosomal protein</keyword>
<sequence length="63" mass="7078">MKANELKDKSVEQLNADLLDLLKAQFGLRMQNATGQLGKPSELKRVRRDIARIKTVLTEKGAK</sequence>
<name>RL29_NEIG2</name>
<comment type="similarity">
    <text evidence="1">Belongs to the universal ribosomal protein uL29 family.</text>
</comment>
<organism>
    <name type="scientific">Neisseria gonorrhoeae (strain NCCP11945)</name>
    <dbReference type="NCBI Taxonomy" id="521006"/>
    <lineage>
        <taxon>Bacteria</taxon>
        <taxon>Pseudomonadati</taxon>
        <taxon>Pseudomonadota</taxon>
        <taxon>Betaproteobacteria</taxon>
        <taxon>Neisseriales</taxon>
        <taxon>Neisseriaceae</taxon>
        <taxon>Neisseria</taxon>
    </lineage>
</organism>
<proteinExistence type="inferred from homology"/>
<feature type="chain" id="PRO_1000121792" description="Large ribosomal subunit protein uL29">
    <location>
        <begin position="1"/>
        <end position="63"/>
    </location>
</feature>
<accession>B4RQY5</accession>
<evidence type="ECO:0000255" key="1">
    <source>
        <dbReference type="HAMAP-Rule" id="MF_00374"/>
    </source>
</evidence>
<evidence type="ECO:0000305" key="2"/>
<dbReference type="EMBL" id="CP001050">
    <property type="protein sequence ID" value="ACF31044.1"/>
    <property type="molecule type" value="Genomic_DNA"/>
</dbReference>
<dbReference type="RefSeq" id="WP_002215432.1">
    <property type="nucleotide sequence ID" value="NC_011035.1"/>
</dbReference>
<dbReference type="SMR" id="B4RQY5"/>
<dbReference type="GeneID" id="93387225"/>
<dbReference type="KEGG" id="ngk:NGK_2443"/>
<dbReference type="HOGENOM" id="CLU_158491_1_2_4"/>
<dbReference type="Proteomes" id="UP000002564">
    <property type="component" value="Chromosome"/>
</dbReference>
<dbReference type="GO" id="GO:0022625">
    <property type="term" value="C:cytosolic large ribosomal subunit"/>
    <property type="evidence" value="ECO:0007669"/>
    <property type="project" value="TreeGrafter"/>
</dbReference>
<dbReference type="GO" id="GO:0003735">
    <property type="term" value="F:structural constituent of ribosome"/>
    <property type="evidence" value="ECO:0007669"/>
    <property type="project" value="InterPro"/>
</dbReference>
<dbReference type="GO" id="GO:0006412">
    <property type="term" value="P:translation"/>
    <property type="evidence" value="ECO:0007669"/>
    <property type="project" value="UniProtKB-UniRule"/>
</dbReference>
<dbReference type="CDD" id="cd00427">
    <property type="entry name" value="Ribosomal_L29_HIP"/>
    <property type="match status" value="1"/>
</dbReference>
<dbReference type="FunFam" id="1.10.287.310:FF:000001">
    <property type="entry name" value="50S ribosomal protein L29"/>
    <property type="match status" value="1"/>
</dbReference>
<dbReference type="Gene3D" id="1.10.287.310">
    <property type="match status" value="1"/>
</dbReference>
<dbReference type="HAMAP" id="MF_00374">
    <property type="entry name" value="Ribosomal_uL29"/>
    <property type="match status" value="1"/>
</dbReference>
<dbReference type="InterPro" id="IPR050063">
    <property type="entry name" value="Ribosomal_protein_uL29"/>
</dbReference>
<dbReference type="InterPro" id="IPR001854">
    <property type="entry name" value="Ribosomal_uL29"/>
</dbReference>
<dbReference type="InterPro" id="IPR018254">
    <property type="entry name" value="Ribosomal_uL29_CS"/>
</dbReference>
<dbReference type="InterPro" id="IPR036049">
    <property type="entry name" value="Ribosomal_uL29_sf"/>
</dbReference>
<dbReference type="NCBIfam" id="TIGR00012">
    <property type="entry name" value="L29"/>
    <property type="match status" value="1"/>
</dbReference>
<dbReference type="PANTHER" id="PTHR10916">
    <property type="entry name" value="60S RIBOSOMAL PROTEIN L35/50S RIBOSOMAL PROTEIN L29"/>
    <property type="match status" value="1"/>
</dbReference>
<dbReference type="PANTHER" id="PTHR10916:SF0">
    <property type="entry name" value="LARGE RIBOSOMAL SUBUNIT PROTEIN UL29C"/>
    <property type="match status" value="1"/>
</dbReference>
<dbReference type="Pfam" id="PF00831">
    <property type="entry name" value="Ribosomal_L29"/>
    <property type="match status" value="1"/>
</dbReference>
<dbReference type="SUPFAM" id="SSF46561">
    <property type="entry name" value="Ribosomal protein L29 (L29p)"/>
    <property type="match status" value="1"/>
</dbReference>
<dbReference type="PROSITE" id="PS00579">
    <property type="entry name" value="RIBOSOMAL_L29"/>
    <property type="match status" value="1"/>
</dbReference>